<accession>Q10QL5</accession>
<accession>B9F5M5</accession>
<accession>Q10QL1</accession>
<accession>Q10QL2</accession>
<accession>Q10QL3</accession>
<accession>Q10QL4</accession>
<protein>
    <recommendedName>
        <fullName>Probable protein phosphatase 2C BIPP2C1</fullName>
        <ecNumber>3.1.3.16</ecNumber>
    </recommendedName>
    <alternativeName>
        <fullName>BTH-induced protein phosphatase 2C 1</fullName>
        <shortName>OsBIPP2C1</shortName>
    </alternativeName>
</protein>
<feature type="chain" id="PRO_0000363327" description="Probable protein phosphatase 2C BIPP2C1">
    <location>
        <begin position="1"/>
        <end position="569"/>
    </location>
</feature>
<feature type="domain" description="PPM-type phosphatase" evidence="2">
    <location>
        <begin position="329"/>
        <end position="564"/>
    </location>
</feature>
<feature type="region of interest" description="Disordered" evidence="3">
    <location>
        <begin position="120"/>
        <end position="214"/>
    </location>
</feature>
<feature type="region of interest" description="Disordered" evidence="3">
    <location>
        <begin position="251"/>
        <end position="279"/>
    </location>
</feature>
<feature type="compositionally biased region" description="Basic and acidic residues" evidence="3">
    <location>
        <begin position="179"/>
        <end position="188"/>
    </location>
</feature>
<feature type="binding site" evidence="1">
    <location>
        <position position="358"/>
    </location>
    <ligand>
        <name>Mn(2+)</name>
        <dbReference type="ChEBI" id="CHEBI:29035"/>
        <label>1</label>
    </ligand>
</feature>
<feature type="binding site" evidence="1">
    <location>
        <position position="358"/>
    </location>
    <ligand>
        <name>Mn(2+)</name>
        <dbReference type="ChEBI" id="CHEBI:29035"/>
        <label>2</label>
    </ligand>
</feature>
<feature type="binding site" evidence="1">
    <location>
        <position position="359"/>
    </location>
    <ligand>
        <name>Mn(2+)</name>
        <dbReference type="ChEBI" id="CHEBI:29035"/>
        <label>1</label>
    </ligand>
</feature>
<feature type="binding site" evidence="1">
    <location>
        <position position="488"/>
    </location>
    <ligand>
        <name>Mn(2+)</name>
        <dbReference type="ChEBI" id="CHEBI:29035"/>
        <label>2</label>
    </ligand>
</feature>
<feature type="binding site" evidence="1">
    <location>
        <position position="555"/>
    </location>
    <ligand>
        <name>Mn(2+)</name>
        <dbReference type="ChEBI" id="CHEBI:29035"/>
        <label>2</label>
    </ligand>
</feature>
<feature type="splice variant" id="VSP_036286" description="In isoform 2." evidence="4">
    <original>MDEEARAAGCSPAPPRAPAASCGAAAELCLCSPTGV</original>
    <variation>MKRRAPPDAPQRRPARRLLPVALPPSSASAPLQVWVRGIHACLISFGFGSRFDLVLVWFGVGLDA</variation>
    <location>
        <begin position="1"/>
        <end position="36"/>
    </location>
</feature>
<feature type="splice variant" id="VSP_036287" description="In isoform 3." evidence="4">
    <location>
        <begin position="35"/>
        <end position="36"/>
    </location>
</feature>
<feature type="splice variant" id="VSP_036288" description="In isoform 4." evidence="4">
    <location>
        <begin position="121"/>
        <end position="256"/>
    </location>
</feature>
<keyword id="KW-0025">Alternative splicing</keyword>
<keyword id="KW-0378">Hydrolase</keyword>
<keyword id="KW-0460">Magnesium</keyword>
<keyword id="KW-0464">Manganese</keyword>
<keyword id="KW-0479">Metal-binding</keyword>
<keyword id="KW-0904">Protein phosphatase</keyword>
<keyword id="KW-1185">Reference proteome</keyword>
<dbReference type="EC" id="3.1.3.16"/>
<dbReference type="EMBL" id="DP000009">
    <property type="protein sequence ID" value="ABF94412.1"/>
    <property type="molecule type" value="Genomic_DNA"/>
</dbReference>
<dbReference type="EMBL" id="DP000009">
    <property type="protein sequence ID" value="ABF94413.1"/>
    <property type="molecule type" value="Genomic_DNA"/>
</dbReference>
<dbReference type="EMBL" id="DP000009">
    <property type="protein sequence ID" value="ABF94414.1"/>
    <property type="status" value="ALT_SEQ"/>
    <property type="molecule type" value="Genomic_DNA"/>
</dbReference>
<dbReference type="EMBL" id="DP000009">
    <property type="protein sequence ID" value="ABF94415.1"/>
    <property type="molecule type" value="Genomic_DNA"/>
</dbReference>
<dbReference type="EMBL" id="DP000009">
    <property type="protein sequence ID" value="ABF94416.1"/>
    <property type="molecule type" value="Genomic_DNA"/>
</dbReference>
<dbReference type="EMBL" id="AP008209">
    <property type="protein sequence ID" value="BAF11154.1"/>
    <property type="molecule type" value="Genomic_DNA"/>
</dbReference>
<dbReference type="EMBL" id="AP014959">
    <property type="protein sequence ID" value="BAS82730.1"/>
    <property type="molecule type" value="Genomic_DNA"/>
</dbReference>
<dbReference type="EMBL" id="CM000140">
    <property type="protein sequence ID" value="EEE58479.1"/>
    <property type="molecule type" value="Genomic_DNA"/>
</dbReference>
<dbReference type="EMBL" id="AK068957">
    <property type="protein sequence ID" value="BAG91182.1"/>
    <property type="molecule type" value="mRNA"/>
</dbReference>
<dbReference type="RefSeq" id="XP_015631689.1">
    <property type="nucleotide sequence ID" value="XM_015776203.1"/>
</dbReference>
<dbReference type="RefSeq" id="XP_015631690.1">
    <property type="nucleotide sequence ID" value="XM_015776204.1"/>
</dbReference>
<dbReference type="SMR" id="Q10QL5"/>
<dbReference type="STRING" id="39947.Q10QL5"/>
<dbReference type="PaxDb" id="39947-Q10QL5"/>
<dbReference type="EnsemblPlants" id="Os03t0192500-01">
    <molecule id="Q10QL5-1"/>
    <property type="protein sequence ID" value="Os03t0192500-01"/>
    <property type="gene ID" value="Os03g0192500"/>
</dbReference>
<dbReference type="Gramene" id="Os03t0192500-01">
    <molecule id="Q10QL5-1"/>
    <property type="protein sequence ID" value="Os03t0192500-01"/>
    <property type="gene ID" value="Os03g0192500"/>
</dbReference>
<dbReference type="KEGG" id="dosa:Os03g0192500"/>
<dbReference type="eggNOG" id="KOG1379">
    <property type="taxonomic scope" value="Eukaryota"/>
</dbReference>
<dbReference type="HOGENOM" id="CLU_029404_8_0_1"/>
<dbReference type="InParanoid" id="Q10QL5"/>
<dbReference type="OMA" id="HTEQAIC"/>
<dbReference type="OrthoDB" id="60843at2759"/>
<dbReference type="Proteomes" id="UP000000763">
    <property type="component" value="Chromosome 3"/>
</dbReference>
<dbReference type="Proteomes" id="UP000007752">
    <property type="component" value="Chromosome 3"/>
</dbReference>
<dbReference type="Proteomes" id="UP000059680">
    <property type="component" value="Chromosome 3"/>
</dbReference>
<dbReference type="GO" id="GO:0046872">
    <property type="term" value="F:metal ion binding"/>
    <property type="evidence" value="ECO:0007669"/>
    <property type="project" value="UniProtKB-KW"/>
</dbReference>
<dbReference type="GO" id="GO:0004722">
    <property type="term" value="F:protein serine/threonine phosphatase activity"/>
    <property type="evidence" value="ECO:0000318"/>
    <property type="project" value="GO_Central"/>
</dbReference>
<dbReference type="Gene3D" id="3.60.40.10">
    <property type="entry name" value="PPM-type phosphatase domain"/>
    <property type="match status" value="2"/>
</dbReference>
<dbReference type="InterPro" id="IPR036457">
    <property type="entry name" value="PPM-type-like_dom_sf"/>
</dbReference>
<dbReference type="InterPro" id="IPR001932">
    <property type="entry name" value="PPM-type_phosphatase-like_dom"/>
</dbReference>
<dbReference type="InterPro" id="IPR039123">
    <property type="entry name" value="PPTC7"/>
</dbReference>
<dbReference type="PANTHER" id="PTHR12320">
    <property type="entry name" value="PROTEIN PHOSPHATASE 2C"/>
    <property type="match status" value="1"/>
</dbReference>
<dbReference type="PANTHER" id="PTHR12320:SF52">
    <property type="entry name" value="PROTEIN PHOSPHATASE 2C BIPP2C1-RELATED"/>
    <property type="match status" value="1"/>
</dbReference>
<dbReference type="Pfam" id="PF13672">
    <property type="entry name" value="PP2C_2"/>
    <property type="match status" value="1"/>
</dbReference>
<dbReference type="SMART" id="SM00331">
    <property type="entry name" value="PP2C_SIG"/>
    <property type="match status" value="1"/>
</dbReference>
<dbReference type="SMART" id="SM00332">
    <property type="entry name" value="PP2Cc"/>
    <property type="match status" value="1"/>
</dbReference>
<dbReference type="SUPFAM" id="SSF81606">
    <property type="entry name" value="PP2C-like"/>
    <property type="match status" value="1"/>
</dbReference>
<dbReference type="PROSITE" id="PS51746">
    <property type="entry name" value="PPM_2"/>
    <property type="match status" value="1"/>
</dbReference>
<name>BIP2C_ORYSJ</name>
<proteinExistence type="evidence at transcript level"/>
<sequence length="569" mass="58800">MDEEARAAGCSPAPPRAPAASCGAAAELCLCSPTGVEGIEQVPGCPCFEDAGAVVVSGEAPEGPGVLCSEDGAELKLAEQGALDVRLGSPAVGIHEQQLLHRGTSGSDEAGAINEISPVEVSPSEASSNLDTAGAIGGSPLMLESLPETSDTRGCEQEVMPGVVVGSSNRDASSEVGVESERGSDADGRNGLGEGELVSSVDGGGAEKSSKVTGVLSEEGVDGMETALEPCVASVGSITQVEEGVDRMETSLDDSEASDGSTTQDFDTDVETESSGSSIEEQDMGYGVHIPHTEQAICEVARGNKSSEVKSSDRMSSVTLPTLILASGAAMLPHPSKVLTGGEDAYFIACDGWFGVADGVGQWSFEGINAGLYARELMDGCKKAVMESQGAPEMRTEEVLAKAADEARSPGSSTVLVAHFDGQVLHACNIGDSGFLVIRNGEIYQKSKPMTYGFNFPLQIEKGDDPFKLVQKYTIDLQEGDAIVTATDGLFDNVYEEEIAAVISKSLEAGLKPSEIAEFLVARAKEVGRSATCRSPFSDAALAVGYLGYSGGKLDDVTVVVSVVRKSEV</sequence>
<organism>
    <name type="scientific">Oryza sativa subsp. japonica</name>
    <name type="common">Rice</name>
    <dbReference type="NCBI Taxonomy" id="39947"/>
    <lineage>
        <taxon>Eukaryota</taxon>
        <taxon>Viridiplantae</taxon>
        <taxon>Streptophyta</taxon>
        <taxon>Embryophyta</taxon>
        <taxon>Tracheophyta</taxon>
        <taxon>Spermatophyta</taxon>
        <taxon>Magnoliopsida</taxon>
        <taxon>Liliopsida</taxon>
        <taxon>Poales</taxon>
        <taxon>Poaceae</taxon>
        <taxon>BOP clade</taxon>
        <taxon>Oryzoideae</taxon>
        <taxon>Oryzeae</taxon>
        <taxon>Oryzinae</taxon>
        <taxon>Oryza</taxon>
        <taxon>Oryza sativa</taxon>
    </lineage>
</organism>
<comment type="function">
    <text evidence="1">May play a role in responses to biotic and abiotic stresses.</text>
</comment>
<comment type="catalytic activity">
    <reaction>
        <text>O-phospho-L-seryl-[protein] + H2O = L-seryl-[protein] + phosphate</text>
        <dbReference type="Rhea" id="RHEA:20629"/>
        <dbReference type="Rhea" id="RHEA-COMP:9863"/>
        <dbReference type="Rhea" id="RHEA-COMP:11604"/>
        <dbReference type="ChEBI" id="CHEBI:15377"/>
        <dbReference type="ChEBI" id="CHEBI:29999"/>
        <dbReference type="ChEBI" id="CHEBI:43474"/>
        <dbReference type="ChEBI" id="CHEBI:83421"/>
        <dbReference type="EC" id="3.1.3.16"/>
    </reaction>
</comment>
<comment type="catalytic activity">
    <reaction>
        <text>O-phospho-L-threonyl-[protein] + H2O = L-threonyl-[protein] + phosphate</text>
        <dbReference type="Rhea" id="RHEA:47004"/>
        <dbReference type="Rhea" id="RHEA-COMP:11060"/>
        <dbReference type="Rhea" id="RHEA-COMP:11605"/>
        <dbReference type="ChEBI" id="CHEBI:15377"/>
        <dbReference type="ChEBI" id="CHEBI:30013"/>
        <dbReference type="ChEBI" id="CHEBI:43474"/>
        <dbReference type="ChEBI" id="CHEBI:61977"/>
        <dbReference type="EC" id="3.1.3.16"/>
    </reaction>
</comment>
<comment type="cofactor">
    <cofactor evidence="1">
        <name>Mg(2+)</name>
        <dbReference type="ChEBI" id="CHEBI:18420"/>
    </cofactor>
    <cofactor evidence="1">
        <name>Mn(2+)</name>
        <dbReference type="ChEBI" id="CHEBI:29035"/>
    </cofactor>
    <text evidence="1">Binds 2 magnesium or manganese ions per subunit.</text>
</comment>
<comment type="alternative products">
    <event type="alternative splicing"/>
    <isoform>
        <id>Q10QL5-1</id>
        <name>1</name>
        <sequence type="displayed"/>
    </isoform>
    <isoform>
        <id>Q10QL5-2</id>
        <name>2</name>
        <sequence type="described" ref="VSP_036286"/>
    </isoform>
    <isoform>
        <id>Q10QL5-3</id>
        <name>3</name>
        <sequence type="described" ref="VSP_036287"/>
    </isoform>
    <isoform>
        <id>Q10QL5-4</id>
        <name>4</name>
        <sequence type="described" ref="VSP_036288"/>
    </isoform>
</comment>
<comment type="miscellaneous">
    <molecule>Isoform 3</molecule>
    <text evidence="4">May be due to a competing donor splice site.</text>
</comment>
<comment type="similarity">
    <text evidence="4">Belongs to the PP2C family.</text>
</comment>
<comment type="sequence caution" evidence="4">
    <conflict type="erroneous gene model prediction">
        <sequence resource="EMBL-CDS" id="ABF94414"/>
    </conflict>
</comment>
<reference key="1">
    <citation type="journal article" date="2005" name="Genome Res.">
        <title>Sequence, annotation, and analysis of synteny between rice chromosome 3 and diverged grass species.</title>
        <authorList>
            <consortium name="The rice chromosome 3 sequencing consortium"/>
            <person name="Buell C.R."/>
            <person name="Yuan Q."/>
            <person name="Ouyang S."/>
            <person name="Liu J."/>
            <person name="Zhu W."/>
            <person name="Wang A."/>
            <person name="Maiti R."/>
            <person name="Haas B."/>
            <person name="Wortman J."/>
            <person name="Pertea M."/>
            <person name="Jones K.M."/>
            <person name="Kim M."/>
            <person name="Overton L."/>
            <person name="Tsitrin T."/>
            <person name="Fadrosh D."/>
            <person name="Bera J."/>
            <person name="Weaver B."/>
            <person name="Jin S."/>
            <person name="Johri S."/>
            <person name="Reardon M."/>
            <person name="Webb K."/>
            <person name="Hill J."/>
            <person name="Moffat K."/>
            <person name="Tallon L."/>
            <person name="Van Aken S."/>
            <person name="Lewis M."/>
            <person name="Utterback T."/>
            <person name="Feldblyum T."/>
            <person name="Zismann V."/>
            <person name="Iobst S."/>
            <person name="Hsiao J."/>
            <person name="de Vazeille A.R."/>
            <person name="Salzberg S.L."/>
            <person name="White O."/>
            <person name="Fraser C.M."/>
            <person name="Yu Y."/>
            <person name="Kim H."/>
            <person name="Rambo T."/>
            <person name="Currie J."/>
            <person name="Collura K."/>
            <person name="Kernodle-Thompson S."/>
            <person name="Wei F."/>
            <person name="Kudrna K."/>
            <person name="Ammiraju J.S.S."/>
            <person name="Luo M."/>
            <person name="Goicoechea J.L."/>
            <person name="Wing R.A."/>
            <person name="Henry D."/>
            <person name="Oates R."/>
            <person name="Palmer M."/>
            <person name="Pries G."/>
            <person name="Saski C."/>
            <person name="Simmons J."/>
            <person name="Soderlund C."/>
            <person name="Nelson W."/>
            <person name="de la Bastide M."/>
            <person name="Spiegel L."/>
            <person name="Nascimento L."/>
            <person name="Huang E."/>
            <person name="Preston R."/>
            <person name="Zutavern T."/>
            <person name="Palmer L."/>
            <person name="O'Shaughnessy A."/>
            <person name="Dike S."/>
            <person name="McCombie W.R."/>
            <person name="Minx P."/>
            <person name="Cordum H."/>
            <person name="Wilson R."/>
            <person name="Jin W."/>
            <person name="Lee H.R."/>
            <person name="Jiang J."/>
            <person name="Jackson S."/>
        </authorList>
    </citation>
    <scope>NUCLEOTIDE SEQUENCE [LARGE SCALE GENOMIC DNA]</scope>
    <source>
        <strain>cv. Nipponbare</strain>
    </source>
</reference>
<reference key="2">
    <citation type="journal article" date="2005" name="Nature">
        <title>The map-based sequence of the rice genome.</title>
        <authorList>
            <consortium name="International rice genome sequencing project (IRGSP)"/>
        </authorList>
    </citation>
    <scope>NUCLEOTIDE SEQUENCE [LARGE SCALE GENOMIC DNA]</scope>
    <source>
        <strain>cv. Nipponbare</strain>
    </source>
</reference>
<reference key="3">
    <citation type="journal article" date="2008" name="Nucleic Acids Res.">
        <title>The rice annotation project database (RAP-DB): 2008 update.</title>
        <authorList>
            <consortium name="The rice annotation project (RAP)"/>
        </authorList>
    </citation>
    <scope>GENOME REANNOTATION</scope>
    <source>
        <strain>cv. Nipponbare</strain>
    </source>
</reference>
<reference key="4">
    <citation type="journal article" date="2013" name="Rice">
        <title>Improvement of the Oryza sativa Nipponbare reference genome using next generation sequence and optical map data.</title>
        <authorList>
            <person name="Kawahara Y."/>
            <person name="de la Bastide M."/>
            <person name="Hamilton J.P."/>
            <person name="Kanamori H."/>
            <person name="McCombie W.R."/>
            <person name="Ouyang S."/>
            <person name="Schwartz D.C."/>
            <person name="Tanaka T."/>
            <person name="Wu J."/>
            <person name="Zhou S."/>
            <person name="Childs K.L."/>
            <person name="Davidson R.M."/>
            <person name="Lin H."/>
            <person name="Quesada-Ocampo L."/>
            <person name="Vaillancourt B."/>
            <person name="Sakai H."/>
            <person name="Lee S.S."/>
            <person name="Kim J."/>
            <person name="Numa H."/>
            <person name="Itoh T."/>
            <person name="Buell C.R."/>
            <person name="Matsumoto T."/>
        </authorList>
    </citation>
    <scope>GENOME REANNOTATION</scope>
    <source>
        <strain>cv. Nipponbare</strain>
    </source>
</reference>
<reference key="5">
    <citation type="journal article" date="2005" name="PLoS Biol.">
        <title>The genomes of Oryza sativa: a history of duplications.</title>
        <authorList>
            <person name="Yu J."/>
            <person name="Wang J."/>
            <person name="Lin W."/>
            <person name="Li S."/>
            <person name="Li H."/>
            <person name="Zhou J."/>
            <person name="Ni P."/>
            <person name="Dong W."/>
            <person name="Hu S."/>
            <person name="Zeng C."/>
            <person name="Zhang J."/>
            <person name="Zhang Y."/>
            <person name="Li R."/>
            <person name="Xu Z."/>
            <person name="Li S."/>
            <person name="Li X."/>
            <person name="Zheng H."/>
            <person name="Cong L."/>
            <person name="Lin L."/>
            <person name="Yin J."/>
            <person name="Geng J."/>
            <person name="Li G."/>
            <person name="Shi J."/>
            <person name="Liu J."/>
            <person name="Lv H."/>
            <person name="Li J."/>
            <person name="Wang J."/>
            <person name="Deng Y."/>
            <person name="Ran L."/>
            <person name="Shi X."/>
            <person name="Wang X."/>
            <person name="Wu Q."/>
            <person name="Li C."/>
            <person name="Ren X."/>
            <person name="Wang J."/>
            <person name="Wang X."/>
            <person name="Li D."/>
            <person name="Liu D."/>
            <person name="Zhang X."/>
            <person name="Ji Z."/>
            <person name="Zhao W."/>
            <person name="Sun Y."/>
            <person name="Zhang Z."/>
            <person name="Bao J."/>
            <person name="Han Y."/>
            <person name="Dong L."/>
            <person name="Ji J."/>
            <person name="Chen P."/>
            <person name="Wu S."/>
            <person name="Liu J."/>
            <person name="Xiao Y."/>
            <person name="Bu D."/>
            <person name="Tan J."/>
            <person name="Yang L."/>
            <person name="Ye C."/>
            <person name="Zhang J."/>
            <person name="Xu J."/>
            <person name="Zhou Y."/>
            <person name="Yu Y."/>
            <person name="Zhang B."/>
            <person name="Zhuang S."/>
            <person name="Wei H."/>
            <person name="Liu B."/>
            <person name="Lei M."/>
            <person name="Yu H."/>
            <person name="Li Y."/>
            <person name="Xu H."/>
            <person name="Wei S."/>
            <person name="He X."/>
            <person name="Fang L."/>
            <person name="Zhang Z."/>
            <person name="Zhang Y."/>
            <person name="Huang X."/>
            <person name="Su Z."/>
            <person name="Tong W."/>
            <person name="Li J."/>
            <person name="Tong Z."/>
            <person name="Li S."/>
            <person name="Ye J."/>
            <person name="Wang L."/>
            <person name="Fang L."/>
            <person name="Lei T."/>
            <person name="Chen C.-S."/>
            <person name="Chen H.-C."/>
            <person name="Xu Z."/>
            <person name="Li H."/>
            <person name="Huang H."/>
            <person name="Zhang F."/>
            <person name="Xu H."/>
            <person name="Li N."/>
            <person name="Zhao C."/>
            <person name="Li S."/>
            <person name="Dong L."/>
            <person name="Huang Y."/>
            <person name="Li L."/>
            <person name="Xi Y."/>
            <person name="Qi Q."/>
            <person name="Li W."/>
            <person name="Zhang B."/>
            <person name="Hu W."/>
            <person name="Zhang Y."/>
            <person name="Tian X."/>
            <person name="Jiao Y."/>
            <person name="Liang X."/>
            <person name="Jin J."/>
            <person name="Gao L."/>
            <person name="Zheng W."/>
            <person name="Hao B."/>
            <person name="Liu S.-M."/>
            <person name="Wang W."/>
            <person name="Yuan L."/>
            <person name="Cao M."/>
            <person name="McDermott J."/>
            <person name="Samudrala R."/>
            <person name="Wang J."/>
            <person name="Wong G.K.-S."/>
            <person name="Yang H."/>
        </authorList>
    </citation>
    <scope>NUCLEOTIDE SEQUENCE [LARGE SCALE GENOMIC DNA]</scope>
    <source>
        <strain>cv. Nipponbare</strain>
    </source>
</reference>
<reference key="6">
    <citation type="journal article" date="2003" name="Science">
        <title>Collection, mapping, and annotation of over 28,000 cDNA clones from japonica rice.</title>
        <authorList>
            <consortium name="The rice full-length cDNA consortium"/>
        </authorList>
    </citation>
    <scope>NUCLEOTIDE SEQUENCE [LARGE SCALE MRNA] (ISOFORM 1)</scope>
    <source>
        <strain>cv. Nipponbare</strain>
    </source>
</reference>
<evidence type="ECO:0000250" key="1"/>
<evidence type="ECO:0000255" key="2">
    <source>
        <dbReference type="PROSITE-ProRule" id="PRU01082"/>
    </source>
</evidence>
<evidence type="ECO:0000256" key="3">
    <source>
        <dbReference type="SAM" id="MobiDB-lite"/>
    </source>
</evidence>
<evidence type="ECO:0000305" key="4"/>
<evidence type="ECO:0000312" key="5">
    <source>
        <dbReference type="EMBL" id="EEE58479.1"/>
    </source>
</evidence>
<gene>
    <name type="primary">BIPP2C1</name>
    <name type="ordered locus">Os03g0192500</name>
    <name type="ordered locus">LOC_Os03g09220</name>
    <name evidence="5" type="ORF">OsJ_09738</name>
</gene>